<proteinExistence type="inferred from homology"/>
<gene>
    <name type="ORF">ORF3/ORF5</name>
</gene>
<feature type="chain" id="PRO_0000390918" description="Minor capsid protein P3-RTD">
    <location>
        <begin position="1"/>
        <end position="493"/>
    </location>
</feature>
<feature type="region of interest" description="Disordered" evidence="2">
    <location>
        <begin position="1"/>
        <end position="50"/>
    </location>
</feature>
<feature type="region of interest" description="Disordered" evidence="2">
    <location>
        <begin position="189"/>
        <end position="218"/>
    </location>
</feature>
<feature type="region of interest" description="Readthrough domain (RTD)">
    <location>
        <begin position="191"/>
        <end position="493"/>
    </location>
</feature>
<feature type="region of interest" description="Disordered" evidence="2">
    <location>
        <begin position="445"/>
        <end position="493"/>
    </location>
</feature>
<feature type="compositionally biased region" description="Basic residues" evidence="2">
    <location>
        <begin position="1"/>
        <end position="18"/>
    </location>
</feature>
<feature type="compositionally biased region" description="Basic residues" evidence="2">
    <location>
        <begin position="32"/>
        <end position="42"/>
    </location>
</feature>
<feature type="compositionally biased region" description="Pro residues" evidence="2">
    <location>
        <begin position="195"/>
        <end position="215"/>
    </location>
</feature>
<feature type="compositionally biased region" description="Basic and acidic residues" evidence="2">
    <location>
        <begin position="484"/>
        <end position="493"/>
    </location>
</feature>
<feature type="unsure residue">
    <location>
        <position position="190"/>
    </location>
</feature>
<comment type="function">
    <text evidence="1 3">Minor component of the viral capsid involved in aphid transmission. The RTD domain of the protein is exposed on the surface of the particle and determines the vector specificity and tropism of the virus (By similarity). The RTD domain is not necessary for virus stability in the host hemolymph.</text>
</comment>
<comment type="subcellular location">
    <molecule>Minor capsid protein P3-RTD</molecule>
    <subcellularLocation>
        <location evidence="4">Virion</location>
    </subcellularLocation>
</comment>
<comment type="miscellaneous">
    <text>This protein is translated as a fusion protein by episodic readthrough of the major coat protein termination codon. It is composed of the major capsid protein fused to a long C-terminal extension called the readthrough domain (RTD). Readthrough of the terminator codon TGA occurs between the codons for 189-Leu and 191-Gly.</text>
</comment>
<comment type="miscellaneous">
    <text>The N-terminal region like those of many plant virus capsid proteins is highly basic. It has been suggested that these regions may be involved in protein-RNA interaction.</text>
</comment>
<comment type="similarity">
    <text evidence="4">Belongs to the luteoviruses readthrough protein family.</text>
</comment>
<reference key="1">
    <citation type="journal article" date="1991" name="J. Gen. Virol.">
        <title>The nucleotide sequence and luteovirus-like nature of RNA 1 of an aphid non-transmissible strain of pea enation mosaic virus.</title>
        <authorList>
            <person name="Demler S.A."/>
            <person name="de Zoeten G.A."/>
        </authorList>
    </citation>
    <scope>NUCLEOTIDE SEQUENCE [GENOMIC RNA]</scope>
</reference>
<reference key="2">
    <citation type="journal article" date="2009" name="Arch. Virol.">
        <title>The readthrough domain of pea enation mosaic virus coat protein is not essential for virus stability in the hemolymph of the pea aphid.</title>
        <authorList>
            <person name="Liu S."/>
            <person name="Sivakumar S."/>
            <person name="Wang Z."/>
            <person name="Bonning B.C."/>
            <person name="Miller W.A."/>
        </authorList>
    </citation>
    <scope>FUNCTION OF READTHROUGH DOMAIN</scope>
</reference>
<protein>
    <recommendedName>
        <fullName>Minor capsid protein P3-RTD</fullName>
    </recommendedName>
    <alternativeName>
        <fullName>Readthrough protein</fullName>
        <shortName>RT protein</shortName>
    </alternativeName>
</protein>
<evidence type="ECO:0000250" key="1"/>
<evidence type="ECO:0000256" key="2">
    <source>
        <dbReference type="SAM" id="MobiDB-lite"/>
    </source>
</evidence>
<evidence type="ECO:0000269" key="3">
    <source>
    </source>
</evidence>
<evidence type="ECO:0000305" key="4"/>
<keyword id="KW-0167">Capsid protein</keyword>
<keyword id="KW-1185">Reference proteome</keyword>
<keyword id="KW-0946">Virion</keyword>
<accession>Q84711</accession>
<name>MCAPS_PEMVW</name>
<sequence length="493" mass="54745">MPTRSRSKANQRRRRPRRVVVVAPSMAQPRTQSRRPRRRNKRGGGLNGSHTVDFSMVHGPFNGNATGTVKFGPSSDCQCIKGNLAAYQKYRIVWLKVVYQSEAAATDRGCIAYHVDTSTTKKAADVVLLDTWNIRSNGSATFGREILGDQPWYESNKDQFFFLYRGTGGTDVAGHYRISGRIQLMNASLWGDDAPPSPGPDPGPQPPPPPPPSPTPVGARFWGYEGVPESRMISERNDHDIDVKPLSFITMYKWEDESWTSVKLSASYLQNDQVEATPYFLIPSSKGKFSVYIECEGFQAVKSIGGKSDGCWGGLIAYNRKKDGWQARAYTGTVLSNYRSTTTVINGHPDCEVNDCKFKPDRGVESDLICSFHLEAEEDSYWALQAPPIQKSSDYNYVVSYGGYTEKSIEWGSVSISIDEVNQTASASPWRGRARKLAILQETAVPPPFPPGGVMDYHLGDREGDQTGTSEKGLLKKPPLPKWDLQRSRSPLD</sequence>
<organism>
    <name type="scientific">Pea enation mosaic virus-1 (strain WSG)</name>
    <name type="common">PEMV-1</name>
    <dbReference type="NCBI Taxonomy" id="693989"/>
    <lineage>
        <taxon>Viruses</taxon>
        <taxon>Riboviria</taxon>
        <taxon>Orthornavirae</taxon>
        <taxon>Pisuviricota</taxon>
        <taxon>Pisoniviricetes</taxon>
        <taxon>Sobelivirales</taxon>
        <taxon>Solemoviridae</taxon>
        <taxon>Enamovirus</taxon>
        <taxon>Pea enation mosaic virus-1</taxon>
    </lineage>
</organism>
<organismHost>
    <name type="scientific">Cicer arietinum</name>
    <name type="common">Chickpea</name>
    <name type="synonym">Garbanzo</name>
    <dbReference type="NCBI Taxonomy" id="3827"/>
</organismHost>
<organismHost>
    <name type="scientific">Lathyrus odoratus</name>
    <name type="common">Sweet pea</name>
    <dbReference type="NCBI Taxonomy" id="3859"/>
</organismHost>
<organismHost>
    <name type="scientific">Lens culinaris</name>
    <name type="common">Lentil</name>
    <name type="synonym">Cicer lens</name>
    <dbReference type="NCBI Taxonomy" id="3864"/>
</organismHost>
<organismHost>
    <name type="scientific">Medicago arabica</name>
    <dbReference type="NCBI Taxonomy" id="70936"/>
</organismHost>
<organismHost>
    <name type="scientific">Pisum sativum</name>
    <name type="common">Garden pea</name>
    <name type="synonym">Lathyrus oleraceus</name>
    <dbReference type="NCBI Taxonomy" id="3888"/>
</organismHost>
<organismHost>
    <name type="scientific">Trifolium incarnatum</name>
    <name type="common">Crimson clover</name>
    <dbReference type="NCBI Taxonomy" id="60916"/>
</organismHost>
<organismHost>
    <name type="scientific">Vicia faba</name>
    <name type="common">Broad bean</name>
    <name type="synonym">Faba vulgaris</name>
    <dbReference type="NCBI Taxonomy" id="3906"/>
</organismHost>
<organismHost>
    <name type="scientific">Vicia sativa</name>
    <name type="common">Spring vetch</name>
    <name type="synonym">Tare</name>
    <dbReference type="NCBI Taxonomy" id="3908"/>
</organismHost>
<dbReference type="EMBL" id="L04573">
    <property type="protein sequence ID" value="AAA72298.1"/>
    <property type="molecule type" value="Genomic_RNA"/>
</dbReference>
<dbReference type="PIR" id="JQ1386">
    <property type="entry name" value="JQ1386"/>
</dbReference>
<dbReference type="SMR" id="Q84711"/>
<dbReference type="Proteomes" id="UP000000519">
    <property type="component" value="Segment"/>
</dbReference>
<dbReference type="GO" id="GO:0019028">
    <property type="term" value="C:viral capsid"/>
    <property type="evidence" value="ECO:0007669"/>
    <property type="project" value="UniProtKB-KW"/>
</dbReference>
<dbReference type="GO" id="GO:0005198">
    <property type="term" value="F:structural molecule activity"/>
    <property type="evidence" value="ECO:0007669"/>
    <property type="project" value="InterPro"/>
</dbReference>
<dbReference type="Gene3D" id="2.60.120.20">
    <property type="match status" value="1"/>
</dbReference>
<dbReference type="InterPro" id="IPR001517">
    <property type="entry name" value="Luteo_coat"/>
</dbReference>
<dbReference type="InterPro" id="IPR002929">
    <property type="entry name" value="PLrV_ORF5"/>
</dbReference>
<dbReference type="InterPro" id="IPR029053">
    <property type="entry name" value="Viral_coat"/>
</dbReference>
<dbReference type="Pfam" id="PF00894">
    <property type="entry name" value="Luteo_coat"/>
    <property type="match status" value="1"/>
</dbReference>
<dbReference type="Pfam" id="PF01690">
    <property type="entry name" value="PLRV_ORF5"/>
    <property type="match status" value="1"/>
</dbReference>
<dbReference type="PRINTS" id="PR00910">
    <property type="entry name" value="LVIRUSORF6"/>
</dbReference>